<proteinExistence type="evidence at protein level"/>
<name>PBP_ANTPO</name>
<protein>
    <recommendedName>
        <fullName>Pheromone-binding protein</fullName>
        <shortName>PBP</shortName>
    </recommendedName>
</protein>
<evidence type="ECO:0000269" key="1">
    <source>
    </source>
</evidence>
<evidence type="ECO:0000305" key="2"/>
<evidence type="ECO:0007829" key="3">
    <source>
        <dbReference type="PDB" id="1QWV"/>
    </source>
</evidence>
<evidence type="ECO:0007829" key="4">
    <source>
        <dbReference type="PDB" id="1TWO"/>
    </source>
</evidence>
<evidence type="ECO:0007829" key="5">
    <source>
        <dbReference type="PDB" id="2JPO"/>
    </source>
</evidence>
<keyword id="KW-0002">3D-structure</keyword>
<keyword id="KW-0903">Direct protein sequencing</keyword>
<keyword id="KW-1015">Disulfide bond</keyword>
<keyword id="KW-0589">Pheromone response</keyword>
<keyword id="KW-0590">Pheromone-binding</keyword>
<keyword id="KW-0732">Signal</keyword>
<keyword id="KW-0813">Transport</keyword>
<organism>
    <name type="scientific">Antheraea polyphemus</name>
    <name type="common">Polyphemus moth</name>
    <dbReference type="NCBI Taxonomy" id="7120"/>
    <lineage>
        <taxon>Eukaryota</taxon>
        <taxon>Metazoa</taxon>
        <taxon>Ecdysozoa</taxon>
        <taxon>Arthropoda</taxon>
        <taxon>Hexapoda</taxon>
        <taxon>Insecta</taxon>
        <taxon>Pterygota</taxon>
        <taxon>Neoptera</taxon>
        <taxon>Endopterygota</taxon>
        <taxon>Lepidoptera</taxon>
        <taxon>Glossata</taxon>
        <taxon>Ditrysia</taxon>
        <taxon>Bombycoidea</taxon>
        <taxon>Saturniidae</taxon>
        <taxon>Saturniinae</taxon>
        <taxon>Saturniini</taxon>
        <taxon>Antheraea</taxon>
    </lineage>
</organism>
<feature type="signal peptide" evidence="1">
    <location>
        <begin position="1"/>
        <end position="21"/>
    </location>
</feature>
<feature type="chain" id="PRO_0000012558" description="Pheromone-binding protein">
    <location>
        <begin position="22"/>
        <end position="163"/>
    </location>
</feature>
<feature type="disulfide bond">
    <location>
        <begin position="40"/>
        <end position="75"/>
    </location>
</feature>
<feature type="disulfide bond">
    <location>
        <begin position="71"/>
        <end position="129"/>
    </location>
</feature>
<feature type="disulfide bond">
    <location>
        <begin position="118"/>
        <end position="138"/>
    </location>
</feature>
<feature type="sequence conflict" description="In Ref. 2; AA sequence." evidence="2" ref="2">
    <original>C</original>
    <variation>S</variation>
    <location>
        <position position="40"/>
    </location>
</feature>
<feature type="helix" evidence="3">
    <location>
        <begin position="23"/>
        <end position="26"/>
    </location>
</feature>
<feature type="helix" evidence="3">
    <location>
        <begin position="29"/>
        <end position="33"/>
    </location>
</feature>
<feature type="helix" evidence="3">
    <location>
        <begin position="37"/>
        <end position="44"/>
    </location>
</feature>
<feature type="helix" evidence="3">
    <location>
        <begin position="48"/>
        <end position="54"/>
    </location>
</feature>
<feature type="turn" evidence="5">
    <location>
        <begin position="58"/>
        <end position="61"/>
    </location>
</feature>
<feature type="turn" evidence="4">
    <location>
        <begin position="63"/>
        <end position="65"/>
    </location>
</feature>
<feature type="helix" evidence="3">
    <location>
        <begin position="67"/>
        <end position="73"/>
    </location>
</feature>
<feature type="helix" evidence="3">
    <location>
        <begin position="76"/>
        <end position="80"/>
    </location>
</feature>
<feature type="strand" evidence="3">
    <location>
        <begin position="84"/>
        <end position="88"/>
    </location>
</feature>
<feature type="helix" evidence="3">
    <location>
        <begin position="92"/>
        <end position="100"/>
    </location>
</feature>
<feature type="helix" evidence="3">
    <location>
        <begin position="105"/>
        <end position="120"/>
    </location>
</feature>
<feature type="turn" evidence="3">
    <location>
        <begin position="128"/>
        <end position="130"/>
    </location>
</feature>
<feature type="helix" evidence="3">
    <location>
        <begin position="131"/>
        <end position="146"/>
    </location>
</feature>
<feature type="strand" evidence="4">
    <location>
        <begin position="155"/>
        <end position="158"/>
    </location>
</feature>
<sequence length="163" mass="18142">MLRKISLLLLPVFVAINLVHSSPEIMKNLSNNFGKAMDQCKDELSLPDSVVADLYNFWKDDYVMTDRLAGCAINCLATKLDVVDPDGNLHHGNAKDFAMKHGADETMAQQLVDIIHGCEKSAPPNDDKCMKTIDVAMCFKKEIHKLNWVPNMDLVIGEVLAEV</sequence>
<dbReference type="EMBL" id="X17559">
    <property type="protein sequence ID" value="CAA35592.1"/>
    <property type="molecule type" value="mRNA"/>
</dbReference>
<dbReference type="PIR" id="S06152">
    <property type="entry name" value="S06152"/>
</dbReference>
<dbReference type="PDB" id="1QWV">
    <property type="method" value="NMR"/>
    <property type="chains" value="A=22-163"/>
</dbReference>
<dbReference type="PDB" id="1TWO">
    <property type="method" value="NMR"/>
    <property type="chains" value="A=22-163"/>
</dbReference>
<dbReference type="PDB" id="2JPO">
    <property type="method" value="NMR"/>
    <property type="chains" value="A=22-163"/>
</dbReference>
<dbReference type="PDBsum" id="1QWV"/>
<dbReference type="PDBsum" id="1TWO"/>
<dbReference type="PDBsum" id="2JPO"/>
<dbReference type="BMRB" id="P20797"/>
<dbReference type="SMR" id="P20797"/>
<dbReference type="EvolutionaryTrace" id="P20797"/>
<dbReference type="GO" id="GO:0005550">
    <property type="term" value="F:pheromone binding"/>
    <property type="evidence" value="ECO:0007669"/>
    <property type="project" value="UniProtKB-KW"/>
</dbReference>
<dbReference type="GO" id="GO:0019236">
    <property type="term" value="P:response to pheromone"/>
    <property type="evidence" value="ECO:0007669"/>
    <property type="project" value="UniProtKB-KW"/>
</dbReference>
<dbReference type="CDD" id="cd23992">
    <property type="entry name" value="PBP_GOBP"/>
    <property type="match status" value="1"/>
</dbReference>
<dbReference type="Gene3D" id="1.10.238.20">
    <property type="entry name" value="Pheromone/general odorant binding protein domain"/>
    <property type="match status" value="1"/>
</dbReference>
<dbReference type="IDEAL" id="IID50312"/>
<dbReference type="InterPro" id="IPR006072">
    <property type="entry name" value="Odorant/phero-bd_Lep"/>
</dbReference>
<dbReference type="InterPro" id="IPR006170">
    <property type="entry name" value="PBP/GOBP"/>
</dbReference>
<dbReference type="InterPro" id="IPR036728">
    <property type="entry name" value="PBP_GOBP_sf"/>
</dbReference>
<dbReference type="Pfam" id="PF01395">
    <property type="entry name" value="PBP_GOBP"/>
    <property type="match status" value="1"/>
</dbReference>
<dbReference type="PIRSF" id="PIRSF015604">
    <property type="entry name" value="Odorant/phero_bd"/>
    <property type="match status" value="1"/>
</dbReference>
<dbReference type="PRINTS" id="PR00484">
    <property type="entry name" value="PBPGOBP"/>
</dbReference>
<dbReference type="SMART" id="SM00708">
    <property type="entry name" value="PhBP"/>
    <property type="match status" value="1"/>
</dbReference>
<dbReference type="SUPFAM" id="SSF47565">
    <property type="entry name" value="Insect pheromone/odorant-binding proteins"/>
    <property type="match status" value="1"/>
</dbReference>
<accession>P20797</accession>
<comment type="function">
    <text>This major soluble protein in olfactory sensilla of male moths might serve to solubilize the extremely hydrophobic pheromone molecules and to transport pheromone through the aqueous lymph to receptors located on olfactory cilia.</text>
</comment>
<comment type="subunit">
    <text evidence="2">Homodimer.</text>
</comment>
<comment type="tissue specificity">
    <text>Antenna.</text>
</comment>
<comment type="developmental stage">
    <text>Its synthesis occurs around the time of eclosion.</text>
</comment>
<comment type="similarity">
    <text evidence="2">Belongs to the PBP/GOBP family.</text>
</comment>
<reference key="1">
    <citation type="journal article" date="1989" name="FEBS Lett.">
        <title>Molecular cloning of an insect pheromone-binding protein.</title>
        <authorList>
            <person name="Raming K."/>
            <person name="Krieger J."/>
            <person name="Breer H."/>
        </authorList>
    </citation>
    <scope>NUCLEOTIDE SEQUENCE [MRNA]</scope>
</reference>
<reference key="2">
    <citation type="journal article" date="1991" name="J. Neurobiol.">
        <title>Odorant-binding-protein subfamilies associate with distinct classes of olfactory receptor neurons in insects.</title>
        <authorList>
            <person name="Vogt R.G."/>
            <person name="Prestwich G.D."/>
            <person name="Lerner M.R."/>
        </authorList>
    </citation>
    <scope>PROTEIN SEQUENCE OF 22-56</scope>
</reference>
<reference key="3">
    <citation type="journal article" date="2004" name="J. Mol. Biol.">
        <title>The solution NMR structure of Antheraea polyphemus PBP provides new insight into pheromone recognition by pheromone-binding proteins.</title>
        <authorList>
            <person name="Mohanty S."/>
            <person name="Zubkov S."/>
            <person name="Gronenborn A.M."/>
        </authorList>
    </citation>
    <scope>STRUCTURE BY NMR OF 22-163</scope>
    <scope>DISULFIDE BONDS</scope>
</reference>
<reference key="4">
    <citation type="journal article" date="2007" name="J. Mol. Biol.">
        <title>Structural basis of ligand binding and release in insect pheromone-binding proteins: NMR structure of Antheraea polyphemus PBP1 at pH 4.5.</title>
        <authorList>
            <person name="Damberger F.F."/>
            <person name="Ishida Y."/>
            <person name="Leal W.S."/>
            <person name="Wuthrich K."/>
        </authorList>
    </citation>
    <scope>STRUCTURE BY NMR OF 22-163</scope>
    <scope>DISULFIDE BONDS</scope>
</reference>
<reference key="5">
    <citation type="journal article" date="2005" name="J. Mol. Biol.">
        <title>Structural consequences of the pH-induced conformational switch in A.polyphemus pheromone-binding protein: mechanisms of ligand release.</title>
        <authorList>
            <person name="Zubkov S."/>
            <person name="Gronenborn A.M."/>
            <person name="Byeon I.J."/>
            <person name="Mohanty S."/>
        </authorList>
    </citation>
    <scope>STRUCTURE BY NMR OF 22-163</scope>
    <scope>DISULFIDE BONDS</scope>
</reference>